<keyword id="KW-0012">Acyltransferase</keyword>
<keyword id="KW-0963">Cytoplasm</keyword>
<keyword id="KW-0276">Fatty acid metabolism</keyword>
<keyword id="KW-0442">Lipid degradation</keyword>
<keyword id="KW-0443">Lipid metabolism</keyword>
<keyword id="KW-1185">Reference proteome</keyword>
<keyword id="KW-0808">Transferase</keyword>
<sequence>MEQVVIVDAIRTPMGRSKGGAFRNVRAEDLSAHLMRSLLARNPALEAAALDDIYWGCVQQTLEQGFNIARNAALLAEVPHSVPAVTVNRLCGSSMQALHDAARMIMTGDAQACLVGGVEHMGHVPMSHGVDFHPGLSRNVAKAAGMMGLTAEMLARMHGISREMQDAFAARSHARAWAATQSAAFKNEIIPTGGHDADGVLKQFNYDEVIRPETTVEALATLRPAFDPVNGTVTAGTSSALSDGAAAMLVMSESRAHELGLKPRARVRSMAVVGCDPSIMGYGPVPASKLALKKAGLSVSDIGVFEMNEAFAAQILPCIKDLGLIEQIDEKINLNGGAIALGHPLGCSGARISTTLLNLMEHKDVQFGLATMCIGLGQGIATVFERV</sequence>
<comment type="function">
    <text evidence="1">Catalyzes the final step of fatty acid oxidation in which acetyl-CoA is released and the CoA ester of a fatty acid two carbons shorter is formed.</text>
</comment>
<comment type="catalytic activity">
    <reaction evidence="1">
        <text>an acyl-CoA + acetyl-CoA = a 3-oxoacyl-CoA + CoA</text>
        <dbReference type="Rhea" id="RHEA:21564"/>
        <dbReference type="ChEBI" id="CHEBI:57287"/>
        <dbReference type="ChEBI" id="CHEBI:57288"/>
        <dbReference type="ChEBI" id="CHEBI:58342"/>
        <dbReference type="ChEBI" id="CHEBI:90726"/>
        <dbReference type="EC" id="2.3.1.16"/>
    </reaction>
</comment>
<comment type="pathway">
    <text evidence="1">Lipid metabolism; fatty acid beta-oxidation.</text>
</comment>
<comment type="subunit">
    <text evidence="1">Heterotetramer of two alpha chains (FadB) and two beta chains (FadA).</text>
</comment>
<comment type="subcellular location">
    <subcellularLocation>
        <location evidence="1">Cytoplasm</location>
    </subcellularLocation>
</comment>
<comment type="similarity">
    <text evidence="1">Belongs to the thiolase-like superfamily. Thiolase family.</text>
</comment>
<proteinExistence type="inferred from homology"/>
<feature type="chain" id="PRO_0000292909" description="3-ketoacyl-CoA thiolase">
    <location>
        <begin position="1"/>
        <end position="387"/>
    </location>
</feature>
<feature type="active site" description="Acyl-thioester intermediate" evidence="1">
    <location>
        <position position="91"/>
    </location>
</feature>
<feature type="active site" description="Proton acceptor" evidence="1">
    <location>
        <position position="343"/>
    </location>
</feature>
<feature type="active site" description="Proton acceptor" evidence="1">
    <location>
        <position position="373"/>
    </location>
</feature>
<dbReference type="EC" id="2.3.1.16" evidence="1"/>
<dbReference type="EMBL" id="CP000034">
    <property type="protein sequence ID" value="ABB63835.1"/>
    <property type="molecule type" value="Genomic_DNA"/>
</dbReference>
<dbReference type="RefSeq" id="WP_000438731.1">
    <property type="nucleotide sequence ID" value="NC_007606.1"/>
</dbReference>
<dbReference type="RefSeq" id="YP_405326.1">
    <property type="nucleotide sequence ID" value="NC_007606.1"/>
</dbReference>
<dbReference type="SMR" id="Q32A20"/>
<dbReference type="STRING" id="300267.SDY_3900"/>
<dbReference type="EnsemblBacteria" id="ABB63835">
    <property type="protein sequence ID" value="ABB63835"/>
    <property type="gene ID" value="SDY_3900"/>
</dbReference>
<dbReference type="KEGG" id="sdy:SDY_3900"/>
<dbReference type="PATRIC" id="fig|300267.13.peg.4608"/>
<dbReference type="HOGENOM" id="CLU_031026_2_3_6"/>
<dbReference type="UniPathway" id="UPA00659"/>
<dbReference type="Proteomes" id="UP000002716">
    <property type="component" value="Chromosome"/>
</dbReference>
<dbReference type="GO" id="GO:0005737">
    <property type="term" value="C:cytoplasm"/>
    <property type="evidence" value="ECO:0007669"/>
    <property type="project" value="UniProtKB-SubCell"/>
</dbReference>
<dbReference type="GO" id="GO:0003988">
    <property type="term" value="F:acetyl-CoA C-acyltransferase activity"/>
    <property type="evidence" value="ECO:0007669"/>
    <property type="project" value="UniProtKB-UniRule"/>
</dbReference>
<dbReference type="GO" id="GO:0006635">
    <property type="term" value="P:fatty acid beta-oxidation"/>
    <property type="evidence" value="ECO:0007669"/>
    <property type="project" value="UniProtKB-UniRule"/>
</dbReference>
<dbReference type="GO" id="GO:0010124">
    <property type="term" value="P:phenylacetate catabolic process"/>
    <property type="evidence" value="ECO:0007669"/>
    <property type="project" value="TreeGrafter"/>
</dbReference>
<dbReference type="CDD" id="cd00751">
    <property type="entry name" value="thiolase"/>
    <property type="match status" value="1"/>
</dbReference>
<dbReference type="FunFam" id="3.40.47.10:FF:000010">
    <property type="entry name" value="Acetyl-CoA acetyltransferase (Thiolase)"/>
    <property type="match status" value="1"/>
</dbReference>
<dbReference type="Gene3D" id="3.40.47.10">
    <property type="match status" value="2"/>
</dbReference>
<dbReference type="HAMAP" id="MF_01620">
    <property type="entry name" value="FadA"/>
    <property type="match status" value="1"/>
</dbReference>
<dbReference type="InterPro" id="IPR012805">
    <property type="entry name" value="FadA"/>
</dbReference>
<dbReference type="InterPro" id="IPR002155">
    <property type="entry name" value="Thiolase"/>
</dbReference>
<dbReference type="InterPro" id="IPR016039">
    <property type="entry name" value="Thiolase-like"/>
</dbReference>
<dbReference type="InterPro" id="IPR050215">
    <property type="entry name" value="Thiolase-like_sf_Thiolase"/>
</dbReference>
<dbReference type="InterPro" id="IPR020615">
    <property type="entry name" value="Thiolase_acyl_enz_int_AS"/>
</dbReference>
<dbReference type="InterPro" id="IPR020610">
    <property type="entry name" value="Thiolase_AS"/>
</dbReference>
<dbReference type="InterPro" id="IPR020617">
    <property type="entry name" value="Thiolase_C"/>
</dbReference>
<dbReference type="InterPro" id="IPR020613">
    <property type="entry name" value="Thiolase_CS"/>
</dbReference>
<dbReference type="InterPro" id="IPR020616">
    <property type="entry name" value="Thiolase_N"/>
</dbReference>
<dbReference type="NCBIfam" id="TIGR01930">
    <property type="entry name" value="AcCoA-C-Actrans"/>
    <property type="match status" value="1"/>
</dbReference>
<dbReference type="NCBIfam" id="TIGR02445">
    <property type="entry name" value="fadA"/>
    <property type="match status" value="1"/>
</dbReference>
<dbReference type="NCBIfam" id="NF006510">
    <property type="entry name" value="PRK08947.1"/>
    <property type="match status" value="1"/>
</dbReference>
<dbReference type="PANTHER" id="PTHR43853:SF11">
    <property type="entry name" value="3-KETOACYL-COA THIOLASE FADA"/>
    <property type="match status" value="1"/>
</dbReference>
<dbReference type="PANTHER" id="PTHR43853">
    <property type="entry name" value="3-KETOACYL-COA THIOLASE, PEROXISOMAL"/>
    <property type="match status" value="1"/>
</dbReference>
<dbReference type="Pfam" id="PF02803">
    <property type="entry name" value="Thiolase_C"/>
    <property type="match status" value="1"/>
</dbReference>
<dbReference type="Pfam" id="PF00108">
    <property type="entry name" value="Thiolase_N"/>
    <property type="match status" value="1"/>
</dbReference>
<dbReference type="PIRSF" id="PIRSF000429">
    <property type="entry name" value="Ac-CoA_Ac_transf"/>
    <property type="match status" value="1"/>
</dbReference>
<dbReference type="SUPFAM" id="SSF53901">
    <property type="entry name" value="Thiolase-like"/>
    <property type="match status" value="2"/>
</dbReference>
<dbReference type="PROSITE" id="PS00098">
    <property type="entry name" value="THIOLASE_1"/>
    <property type="match status" value="1"/>
</dbReference>
<dbReference type="PROSITE" id="PS00737">
    <property type="entry name" value="THIOLASE_2"/>
    <property type="match status" value="1"/>
</dbReference>
<dbReference type="PROSITE" id="PS00099">
    <property type="entry name" value="THIOLASE_3"/>
    <property type="match status" value="1"/>
</dbReference>
<accession>Q32A20</accession>
<name>FADA_SHIDS</name>
<gene>
    <name evidence="1" type="primary">fadA</name>
    <name type="ordered locus">SDY_3900</name>
</gene>
<organism>
    <name type="scientific">Shigella dysenteriae serotype 1 (strain Sd197)</name>
    <dbReference type="NCBI Taxonomy" id="300267"/>
    <lineage>
        <taxon>Bacteria</taxon>
        <taxon>Pseudomonadati</taxon>
        <taxon>Pseudomonadota</taxon>
        <taxon>Gammaproteobacteria</taxon>
        <taxon>Enterobacterales</taxon>
        <taxon>Enterobacteriaceae</taxon>
        <taxon>Shigella</taxon>
    </lineage>
</organism>
<reference key="1">
    <citation type="journal article" date="2005" name="Nucleic Acids Res.">
        <title>Genome dynamics and diversity of Shigella species, the etiologic agents of bacillary dysentery.</title>
        <authorList>
            <person name="Yang F."/>
            <person name="Yang J."/>
            <person name="Zhang X."/>
            <person name="Chen L."/>
            <person name="Jiang Y."/>
            <person name="Yan Y."/>
            <person name="Tang X."/>
            <person name="Wang J."/>
            <person name="Xiong Z."/>
            <person name="Dong J."/>
            <person name="Xue Y."/>
            <person name="Zhu Y."/>
            <person name="Xu X."/>
            <person name="Sun L."/>
            <person name="Chen S."/>
            <person name="Nie H."/>
            <person name="Peng J."/>
            <person name="Xu J."/>
            <person name="Wang Y."/>
            <person name="Yuan Z."/>
            <person name="Wen Y."/>
            <person name="Yao Z."/>
            <person name="Shen Y."/>
            <person name="Qiang B."/>
            <person name="Hou Y."/>
            <person name="Yu J."/>
            <person name="Jin Q."/>
        </authorList>
    </citation>
    <scope>NUCLEOTIDE SEQUENCE [LARGE SCALE GENOMIC DNA]</scope>
    <source>
        <strain>Sd197</strain>
    </source>
</reference>
<evidence type="ECO:0000255" key="1">
    <source>
        <dbReference type="HAMAP-Rule" id="MF_01620"/>
    </source>
</evidence>
<protein>
    <recommendedName>
        <fullName evidence="1">3-ketoacyl-CoA thiolase</fullName>
        <ecNumber evidence="1">2.3.1.16</ecNumber>
    </recommendedName>
    <alternativeName>
        <fullName evidence="1">Acetyl-CoA acyltransferase</fullName>
    </alternativeName>
    <alternativeName>
        <fullName evidence="1">Beta-ketothiolase</fullName>
    </alternativeName>
    <alternativeName>
        <fullName evidence="1">Fatty acid oxidation complex subunit beta</fullName>
    </alternativeName>
</protein>